<sequence>MGHGVEGRNRPSAPLDSQAAAQVASTLQALATPSRLMILTQLRNGPLPVTDLAEAIGMEQSAVSHQLRVLRNLGLVVGDRAGRSIVYSLYDTHVAQLLDEAIYHSEHLHLGLSDRHPSAG</sequence>
<reference key="1">
    <citation type="journal article" date="1998" name="Nature">
        <title>Deciphering the biology of Mycobacterium tuberculosis from the complete genome sequence.</title>
        <authorList>
            <person name="Cole S.T."/>
            <person name="Brosch R."/>
            <person name="Parkhill J."/>
            <person name="Garnier T."/>
            <person name="Churcher C.M."/>
            <person name="Harris D.E."/>
            <person name="Gordon S.V."/>
            <person name="Eiglmeier K."/>
            <person name="Gas S."/>
            <person name="Barry C.E. III"/>
            <person name="Tekaia F."/>
            <person name="Badcock K."/>
            <person name="Basham D."/>
            <person name="Brown D."/>
            <person name="Chillingworth T."/>
            <person name="Connor R."/>
            <person name="Davies R.M."/>
            <person name="Devlin K."/>
            <person name="Feltwell T."/>
            <person name="Gentles S."/>
            <person name="Hamlin N."/>
            <person name="Holroyd S."/>
            <person name="Hornsby T."/>
            <person name="Jagels K."/>
            <person name="Krogh A."/>
            <person name="McLean J."/>
            <person name="Moule S."/>
            <person name="Murphy L.D."/>
            <person name="Oliver S."/>
            <person name="Osborne J."/>
            <person name="Quail M.A."/>
            <person name="Rajandream M.A."/>
            <person name="Rogers J."/>
            <person name="Rutter S."/>
            <person name="Seeger K."/>
            <person name="Skelton S."/>
            <person name="Squares S."/>
            <person name="Squares R."/>
            <person name="Sulston J.E."/>
            <person name="Taylor K."/>
            <person name="Whitehead S."/>
            <person name="Barrell B.G."/>
        </authorList>
    </citation>
    <scope>NUCLEOTIDE SEQUENCE [LARGE SCALE GENOMIC DNA]</scope>
    <source>
        <strain>ATCC 25618 / H37Rv</strain>
    </source>
</reference>
<reference key="2">
    <citation type="journal article" date="2002" name="J. Biol. Chem.">
        <title>A nickel-cobalt-sensing ArsR-SmtB family repressor. Contributions of cytosol and effector binding sites to metal selectivity.</title>
        <authorList>
            <person name="Cavet J.S."/>
            <person name="Meng W."/>
            <person name="Pennella M.A."/>
            <person name="Appelhoff R.J."/>
            <person name="Giedroc D.P."/>
            <person name="Robinson N.J."/>
        </authorList>
    </citation>
    <scope>FUNCTION</scope>
    <scope>DNA-BINDING</scope>
    <scope>ACTIVITY REGULATION</scope>
    <scope>GENE NAME</scope>
    <scope>MUTAGENESIS OF ASP-51; ASP-91; HIS-93; HIS-104; HIS-107; HIS-109; ASP-114 AND HIS-116</scope>
    <source>
        <strain>ATCC 25618 / H37Rv</strain>
    </source>
</reference>
<reference key="3">
    <citation type="journal article" date="2011" name="Mol. Cell. Proteomics">
        <title>Proteogenomic analysis of Mycobacterium tuberculosis by high resolution mass spectrometry.</title>
        <authorList>
            <person name="Kelkar D.S."/>
            <person name="Kumar D."/>
            <person name="Kumar P."/>
            <person name="Balakrishnan L."/>
            <person name="Muthusamy B."/>
            <person name="Yadav A.K."/>
            <person name="Shrivastava P."/>
            <person name="Marimuthu A."/>
            <person name="Anand S."/>
            <person name="Sundaram H."/>
            <person name="Kingsbury R."/>
            <person name="Harsha H.C."/>
            <person name="Nair B."/>
            <person name="Prasad T.S."/>
            <person name="Chauhan D.S."/>
            <person name="Katoch K."/>
            <person name="Katoch V.M."/>
            <person name="Kumar P."/>
            <person name="Chaerkady R."/>
            <person name="Ramachandran S."/>
            <person name="Dash D."/>
            <person name="Pandey A."/>
        </authorList>
    </citation>
    <scope>IDENTIFICATION BY MASS SPECTROMETRY [LARGE SCALE ANALYSIS]</scope>
    <source>
        <strain>ATCC 25618 / H37Rv</strain>
    </source>
</reference>
<reference key="4">
    <citation type="journal article" date="2012" name="Biochemistry">
        <title>Solution structure of Mycobacterium tuberculosis NmtR in the apo state: insights into Ni(II)-mediated allostery.</title>
        <authorList>
            <person name="Lee C.W."/>
            <person name="Chakravorty D.K."/>
            <person name="Chang F.M."/>
            <person name="Reyes-Caballero H."/>
            <person name="Ye Y."/>
            <person name="Merz K.M. Jr."/>
            <person name="Giedroc D.P."/>
        </authorList>
    </citation>
    <scope>STRUCTURE BY NMR</scope>
    <scope>ACTIVITY REGULATION</scope>
    <scope>SUBUNIT</scope>
    <scope>MASS SPECTROMETRY</scope>
    <scope>NICKEL-BINDING SITES</scope>
</reference>
<name>NMTR_MYCTU</name>
<comment type="function">
    <text evidence="2">Represses transcription of ctpJ/nmtA, by binding to its promoter region.</text>
</comment>
<comment type="activity regulation">
    <text evidence="2 3">Binding to DNA is inhibited by nickel and, to some extent, cobalt ions.</text>
</comment>
<comment type="subunit">
    <text evidence="3">Homodimer.</text>
</comment>
<comment type="mass spectrometry"/>
<gene>
    <name type="primary">nmtR</name>
    <name type="ordered locus">Rv3744</name>
</gene>
<accession>O69711</accession>
<accession>L0TGE5</accession>
<evidence type="ECO:0000255" key="1">
    <source>
        <dbReference type="PROSITE-ProRule" id="PRU00340"/>
    </source>
</evidence>
<evidence type="ECO:0000269" key="2">
    <source>
    </source>
</evidence>
<evidence type="ECO:0000269" key="3">
    <source>
    </source>
</evidence>
<proteinExistence type="evidence at protein level"/>
<protein>
    <recommendedName>
        <fullName>HTH-type transcriptional regulator NmtR</fullName>
    </recommendedName>
</protein>
<dbReference type="EMBL" id="AL123456">
    <property type="protein sequence ID" value="CCP46571.1"/>
    <property type="molecule type" value="Genomic_DNA"/>
</dbReference>
<dbReference type="PIR" id="A70799">
    <property type="entry name" value="A70799"/>
</dbReference>
<dbReference type="RefSeq" id="NP_218261.1">
    <property type="nucleotide sequence ID" value="NC_000962.3"/>
</dbReference>
<dbReference type="RefSeq" id="WP_003901716.1">
    <property type="nucleotide sequence ID" value="NZ_NVQJ01000009.1"/>
</dbReference>
<dbReference type="BMRB" id="O69711"/>
<dbReference type="SMR" id="O69711"/>
<dbReference type="STRING" id="83332.Rv3744"/>
<dbReference type="PaxDb" id="83332-Rv3744"/>
<dbReference type="DNASU" id="885418"/>
<dbReference type="GeneID" id="45427743"/>
<dbReference type="GeneID" id="885418"/>
<dbReference type="KEGG" id="mtu:Rv3744"/>
<dbReference type="KEGG" id="mtv:RVBD_3744"/>
<dbReference type="TubercuList" id="Rv3744"/>
<dbReference type="eggNOG" id="COG0640">
    <property type="taxonomic scope" value="Bacteria"/>
</dbReference>
<dbReference type="InParanoid" id="O69711"/>
<dbReference type="OrthoDB" id="3268605at2"/>
<dbReference type="PhylomeDB" id="O69711"/>
<dbReference type="PRO" id="PR:O69711"/>
<dbReference type="Proteomes" id="UP000001584">
    <property type="component" value="Chromosome"/>
</dbReference>
<dbReference type="GO" id="GO:0003677">
    <property type="term" value="F:DNA binding"/>
    <property type="evidence" value="ECO:0007669"/>
    <property type="project" value="UniProtKB-KW"/>
</dbReference>
<dbReference type="GO" id="GO:0003700">
    <property type="term" value="F:DNA-binding transcription factor activity"/>
    <property type="evidence" value="ECO:0007669"/>
    <property type="project" value="InterPro"/>
</dbReference>
<dbReference type="GO" id="GO:0046872">
    <property type="term" value="F:metal ion binding"/>
    <property type="evidence" value="ECO:0007669"/>
    <property type="project" value="UniProtKB-KW"/>
</dbReference>
<dbReference type="CDD" id="cd00090">
    <property type="entry name" value="HTH_ARSR"/>
    <property type="match status" value="1"/>
</dbReference>
<dbReference type="Gene3D" id="1.10.10.10">
    <property type="entry name" value="Winged helix-like DNA-binding domain superfamily/Winged helix DNA-binding domain"/>
    <property type="match status" value="1"/>
</dbReference>
<dbReference type="InterPro" id="IPR011991">
    <property type="entry name" value="ArsR-like_HTH"/>
</dbReference>
<dbReference type="InterPro" id="IPR001845">
    <property type="entry name" value="HTH_ArsR_DNA-bd_dom"/>
</dbReference>
<dbReference type="InterPro" id="IPR051011">
    <property type="entry name" value="Metal_resp_trans_reg"/>
</dbReference>
<dbReference type="InterPro" id="IPR036388">
    <property type="entry name" value="WH-like_DNA-bd_sf"/>
</dbReference>
<dbReference type="InterPro" id="IPR036390">
    <property type="entry name" value="WH_DNA-bd_sf"/>
</dbReference>
<dbReference type="NCBIfam" id="NF033788">
    <property type="entry name" value="HTH_metalloreg"/>
    <property type="match status" value="1"/>
</dbReference>
<dbReference type="PANTHER" id="PTHR43132">
    <property type="entry name" value="ARSENICAL RESISTANCE OPERON REPRESSOR ARSR-RELATED"/>
    <property type="match status" value="1"/>
</dbReference>
<dbReference type="PANTHER" id="PTHR43132:SF6">
    <property type="entry name" value="HTH-TYPE TRANSCRIPTIONAL REPRESSOR CZRA"/>
    <property type="match status" value="1"/>
</dbReference>
<dbReference type="Pfam" id="PF01022">
    <property type="entry name" value="HTH_5"/>
    <property type="match status" value="1"/>
</dbReference>
<dbReference type="PRINTS" id="PR00778">
    <property type="entry name" value="HTHARSR"/>
</dbReference>
<dbReference type="SMART" id="SM00418">
    <property type="entry name" value="HTH_ARSR"/>
    <property type="match status" value="1"/>
</dbReference>
<dbReference type="SUPFAM" id="SSF46785">
    <property type="entry name" value="Winged helix' DNA-binding domain"/>
    <property type="match status" value="1"/>
</dbReference>
<dbReference type="PROSITE" id="PS50987">
    <property type="entry name" value="HTH_ARSR_2"/>
    <property type="match status" value="1"/>
</dbReference>
<feature type="chain" id="PRO_0000419179" description="HTH-type transcriptional regulator NmtR">
    <location>
        <begin position="1"/>
        <end position="120"/>
    </location>
</feature>
<feature type="domain" description="HTH arsR-type" evidence="1">
    <location>
        <begin position="15"/>
        <end position="109"/>
    </location>
</feature>
<feature type="DNA-binding region" description="H-T-H motif" evidence="1">
    <location>
        <begin position="49"/>
        <end position="72"/>
    </location>
</feature>
<feature type="binding site">
    <location>
        <position position="91"/>
    </location>
    <ligand>
        <name>Ni(2+)</name>
        <dbReference type="ChEBI" id="CHEBI:49786"/>
    </ligand>
</feature>
<feature type="binding site">
    <location>
        <position position="93"/>
    </location>
    <ligand>
        <name>Ni(2+)</name>
        <dbReference type="ChEBI" id="CHEBI:49786"/>
    </ligand>
</feature>
<feature type="binding site">
    <location>
        <position position="104"/>
    </location>
    <ligand>
        <name>Ni(2+)</name>
        <dbReference type="ChEBI" id="CHEBI:49786"/>
    </ligand>
</feature>
<feature type="binding site">
    <location>
        <position position="107"/>
    </location>
    <ligand>
        <name>Ni(2+)</name>
        <dbReference type="ChEBI" id="CHEBI:49786"/>
    </ligand>
</feature>
<feature type="mutagenesis site" description="Does not affect activity and regulation by metal ions." evidence="2">
    <original>D</original>
    <variation>A</variation>
    <location>
        <position position="51"/>
    </location>
</feature>
<feature type="mutagenesis site" description="No change in activity. Lack of regulation by metal ions." evidence="2">
    <original>D</original>
    <variation>A</variation>
    <location>
        <position position="91"/>
    </location>
</feature>
<feature type="mutagenesis site" description="No change in activity. Lack of regulation by metal ions." evidence="2">
    <original>H</original>
    <variation>R</variation>
    <location>
        <position position="93"/>
    </location>
</feature>
<feature type="mutagenesis site" description="No change in activity. Lack of regulation by metal ions." evidence="2">
    <original>H</original>
    <variation>R</variation>
    <location>
        <position position="104"/>
    </location>
</feature>
<feature type="mutagenesis site" description="No change in activity. Lack of regulation by metal ions." evidence="2">
    <original>H</original>
    <variation>R</variation>
    <location>
        <position position="107"/>
    </location>
</feature>
<feature type="mutagenesis site" description="No change in activity. Lack of regulation by metal ions." evidence="2">
    <original>H</original>
    <variation>R</variation>
    <location>
        <position position="109"/>
    </location>
</feature>
<feature type="mutagenesis site" description="Does not affect activity and regulation by metal ions." evidence="2">
    <original>D</original>
    <variation>A</variation>
    <location>
        <position position="114"/>
    </location>
</feature>
<feature type="mutagenesis site" description="No change in activity. Lack of regulation by metal ions." evidence="2">
    <original>H</original>
    <variation>R</variation>
    <location>
        <position position="116"/>
    </location>
</feature>
<organism>
    <name type="scientific">Mycobacterium tuberculosis (strain ATCC 25618 / H37Rv)</name>
    <dbReference type="NCBI Taxonomy" id="83332"/>
    <lineage>
        <taxon>Bacteria</taxon>
        <taxon>Bacillati</taxon>
        <taxon>Actinomycetota</taxon>
        <taxon>Actinomycetes</taxon>
        <taxon>Mycobacteriales</taxon>
        <taxon>Mycobacteriaceae</taxon>
        <taxon>Mycobacterium</taxon>
        <taxon>Mycobacterium tuberculosis complex</taxon>
    </lineage>
</organism>
<keyword id="KW-0238">DNA-binding</keyword>
<keyword id="KW-0479">Metal-binding</keyword>
<keyword id="KW-0533">Nickel</keyword>
<keyword id="KW-1185">Reference proteome</keyword>
<keyword id="KW-0678">Repressor</keyword>
<keyword id="KW-0804">Transcription</keyword>
<keyword id="KW-0805">Transcription regulation</keyword>